<organism>
    <name type="scientific">Cellvibrio japonicus (strain Ueda107)</name>
    <name type="common">Pseudomonas fluorescens subsp. cellulosa</name>
    <dbReference type="NCBI Taxonomy" id="498211"/>
    <lineage>
        <taxon>Bacteria</taxon>
        <taxon>Pseudomonadati</taxon>
        <taxon>Pseudomonadota</taxon>
        <taxon>Gammaproteobacteria</taxon>
        <taxon>Cellvibrionales</taxon>
        <taxon>Cellvibrionaceae</taxon>
        <taxon>Cellvibrio</taxon>
    </lineage>
</organism>
<name>DTD_CELJU</name>
<gene>
    <name evidence="1" type="primary">dtd</name>
    <name type="ordered locus">CJA_3655</name>
</gene>
<proteinExistence type="inferred from homology"/>
<keyword id="KW-0963">Cytoplasm</keyword>
<keyword id="KW-0378">Hydrolase</keyword>
<keyword id="KW-1185">Reference proteome</keyword>
<keyword id="KW-0694">RNA-binding</keyword>
<keyword id="KW-0820">tRNA-binding</keyword>
<feature type="chain" id="PRO_1000127503" description="D-aminoacyl-tRNA deacylase">
    <location>
        <begin position="1"/>
        <end position="146"/>
    </location>
</feature>
<feature type="short sequence motif" description="Gly-cisPro motif, important for rejection of L-amino acids" evidence="1">
    <location>
        <begin position="137"/>
        <end position="138"/>
    </location>
</feature>
<comment type="function">
    <text evidence="1">An aminoacyl-tRNA editing enzyme that deacylates mischarged D-aminoacyl-tRNAs. Also deacylates mischarged glycyl-tRNA(Ala), protecting cells against glycine mischarging by AlaRS. Acts via tRNA-based rather than protein-based catalysis; rejects L-amino acids rather than detecting D-amino acids in the active site. By recycling D-aminoacyl-tRNA to D-amino acids and free tRNA molecules, this enzyme counteracts the toxicity associated with the formation of D-aminoacyl-tRNA entities in vivo and helps enforce protein L-homochirality.</text>
</comment>
<comment type="catalytic activity">
    <reaction evidence="1">
        <text>glycyl-tRNA(Ala) + H2O = tRNA(Ala) + glycine + H(+)</text>
        <dbReference type="Rhea" id="RHEA:53744"/>
        <dbReference type="Rhea" id="RHEA-COMP:9657"/>
        <dbReference type="Rhea" id="RHEA-COMP:13640"/>
        <dbReference type="ChEBI" id="CHEBI:15377"/>
        <dbReference type="ChEBI" id="CHEBI:15378"/>
        <dbReference type="ChEBI" id="CHEBI:57305"/>
        <dbReference type="ChEBI" id="CHEBI:78442"/>
        <dbReference type="ChEBI" id="CHEBI:78522"/>
        <dbReference type="EC" id="3.1.1.96"/>
    </reaction>
</comment>
<comment type="catalytic activity">
    <reaction evidence="1">
        <text>a D-aminoacyl-tRNA + H2O = a tRNA + a D-alpha-amino acid + H(+)</text>
        <dbReference type="Rhea" id="RHEA:13953"/>
        <dbReference type="Rhea" id="RHEA-COMP:10123"/>
        <dbReference type="Rhea" id="RHEA-COMP:10124"/>
        <dbReference type="ChEBI" id="CHEBI:15377"/>
        <dbReference type="ChEBI" id="CHEBI:15378"/>
        <dbReference type="ChEBI" id="CHEBI:59871"/>
        <dbReference type="ChEBI" id="CHEBI:78442"/>
        <dbReference type="ChEBI" id="CHEBI:79333"/>
        <dbReference type="EC" id="3.1.1.96"/>
    </reaction>
</comment>
<comment type="subunit">
    <text evidence="1">Homodimer.</text>
</comment>
<comment type="subcellular location">
    <subcellularLocation>
        <location evidence="1">Cytoplasm</location>
    </subcellularLocation>
</comment>
<comment type="domain">
    <text evidence="1">A Gly-cisPro motif from one monomer fits into the active site of the other monomer to allow specific chiral rejection of L-amino acids.</text>
</comment>
<comment type="similarity">
    <text evidence="1">Belongs to the DTD family.</text>
</comment>
<accession>B3PHR3</accession>
<dbReference type="EC" id="3.1.1.96" evidence="1"/>
<dbReference type="EMBL" id="CP000934">
    <property type="protein sequence ID" value="ACE85941.1"/>
    <property type="molecule type" value="Genomic_DNA"/>
</dbReference>
<dbReference type="RefSeq" id="WP_012489229.1">
    <property type="nucleotide sequence ID" value="NC_010995.1"/>
</dbReference>
<dbReference type="SMR" id="B3PHR3"/>
<dbReference type="STRING" id="498211.CJA_3655"/>
<dbReference type="KEGG" id="cja:CJA_3655"/>
<dbReference type="eggNOG" id="COG1490">
    <property type="taxonomic scope" value="Bacteria"/>
</dbReference>
<dbReference type="HOGENOM" id="CLU_076901_1_1_6"/>
<dbReference type="OrthoDB" id="9801395at2"/>
<dbReference type="Proteomes" id="UP000001036">
    <property type="component" value="Chromosome"/>
</dbReference>
<dbReference type="GO" id="GO:0005737">
    <property type="term" value="C:cytoplasm"/>
    <property type="evidence" value="ECO:0007669"/>
    <property type="project" value="UniProtKB-SubCell"/>
</dbReference>
<dbReference type="GO" id="GO:0051500">
    <property type="term" value="F:D-tyrosyl-tRNA(Tyr) deacylase activity"/>
    <property type="evidence" value="ECO:0007669"/>
    <property type="project" value="TreeGrafter"/>
</dbReference>
<dbReference type="GO" id="GO:0106026">
    <property type="term" value="F:Gly-tRNA(Ala) deacylase activity"/>
    <property type="evidence" value="ECO:0007669"/>
    <property type="project" value="UniProtKB-UniRule"/>
</dbReference>
<dbReference type="GO" id="GO:0043908">
    <property type="term" value="F:Ser(Gly)-tRNA(Ala) hydrolase activity"/>
    <property type="evidence" value="ECO:0007669"/>
    <property type="project" value="UniProtKB-UniRule"/>
</dbReference>
<dbReference type="GO" id="GO:0000049">
    <property type="term" value="F:tRNA binding"/>
    <property type="evidence" value="ECO:0007669"/>
    <property type="project" value="UniProtKB-UniRule"/>
</dbReference>
<dbReference type="GO" id="GO:0019478">
    <property type="term" value="P:D-amino acid catabolic process"/>
    <property type="evidence" value="ECO:0007669"/>
    <property type="project" value="UniProtKB-UniRule"/>
</dbReference>
<dbReference type="CDD" id="cd00563">
    <property type="entry name" value="Dtyr_deacylase"/>
    <property type="match status" value="1"/>
</dbReference>
<dbReference type="FunFam" id="3.50.80.10:FF:000001">
    <property type="entry name" value="D-aminoacyl-tRNA deacylase"/>
    <property type="match status" value="1"/>
</dbReference>
<dbReference type="Gene3D" id="3.50.80.10">
    <property type="entry name" value="D-tyrosyl-tRNA(Tyr) deacylase"/>
    <property type="match status" value="1"/>
</dbReference>
<dbReference type="HAMAP" id="MF_00518">
    <property type="entry name" value="Deacylase_Dtd"/>
    <property type="match status" value="1"/>
</dbReference>
<dbReference type="InterPro" id="IPR003732">
    <property type="entry name" value="Daa-tRNA_deacyls_DTD"/>
</dbReference>
<dbReference type="InterPro" id="IPR023509">
    <property type="entry name" value="DTD-like_sf"/>
</dbReference>
<dbReference type="NCBIfam" id="TIGR00256">
    <property type="entry name" value="D-aminoacyl-tRNA deacylase"/>
    <property type="match status" value="1"/>
</dbReference>
<dbReference type="PANTHER" id="PTHR10472:SF5">
    <property type="entry name" value="D-AMINOACYL-TRNA DEACYLASE 1"/>
    <property type="match status" value="1"/>
</dbReference>
<dbReference type="PANTHER" id="PTHR10472">
    <property type="entry name" value="D-TYROSYL-TRNA TYR DEACYLASE"/>
    <property type="match status" value="1"/>
</dbReference>
<dbReference type="Pfam" id="PF02580">
    <property type="entry name" value="Tyr_Deacylase"/>
    <property type="match status" value="1"/>
</dbReference>
<dbReference type="SUPFAM" id="SSF69500">
    <property type="entry name" value="DTD-like"/>
    <property type="match status" value="1"/>
</dbReference>
<sequence length="146" mass="16019">MLGLIQRVRRASVEVDQQVVGEIDQGMLLLLGIQKTDTEASADKLIDKLLAYRLFADADNRMNCNLQQVDGGILVVSQFTLAADTKKGLRPSFSSAAPPAQAQQLYDYFVTQLRSRHAKVATGIFAADMQVSLVNDGPVTFMLEMD</sequence>
<evidence type="ECO:0000255" key="1">
    <source>
        <dbReference type="HAMAP-Rule" id="MF_00518"/>
    </source>
</evidence>
<protein>
    <recommendedName>
        <fullName evidence="1">D-aminoacyl-tRNA deacylase</fullName>
        <shortName evidence="1">DTD</shortName>
        <ecNumber evidence="1">3.1.1.96</ecNumber>
    </recommendedName>
    <alternativeName>
        <fullName evidence="1">Gly-tRNA(Ala) deacylase</fullName>
    </alternativeName>
</protein>
<reference key="1">
    <citation type="journal article" date="2008" name="J. Bacteriol.">
        <title>Insights into plant cell wall degradation from the genome sequence of the soil bacterium Cellvibrio japonicus.</title>
        <authorList>
            <person name="DeBoy R.T."/>
            <person name="Mongodin E.F."/>
            <person name="Fouts D.E."/>
            <person name="Tailford L.E."/>
            <person name="Khouri H."/>
            <person name="Emerson J.B."/>
            <person name="Mohamoud Y."/>
            <person name="Watkins K."/>
            <person name="Henrissat B."/>
            <person name="Gilbert H.J."/>
            <person name="Nelson K.E."/>
        </authorList>
    </citation>
    <scope>NUCLEOTIDE SEQUENCE [LARGE SCALE GENOMIC DNA]</scope>
    <source>
        <strain>Ueda107</strain>
    </source>
</reference>